<proteinExistence type="inferred from homology"/>
<reference key="1">
    <citation type="submission" date="2005-08" db="EMBL/GenBank/DDBJ databases">
        <title>Complete sequence of Pelodictyon luteolum DSM 273.</title>
        <authorList>
            <consortium name="US DOE Joint Genome Institute"/>
            <person name="Copeland A."/>
            <person name="Lucas S."/>
            <person name="Lapidus A."/>
            <person name="Barry K."/>
            <person name="Detter J.C."/>
            <person name="Glavina T."/>
            <person name="Hammon N."/>
            <person name="Israni S."/>
            <person name="Pitluck S."/>
            <person name="Bryant D."/>
            <person name="Schmutz J."/>
            <person name="Larimer F."/>
            <person name="Land M."/>
            <person name="Kyrpides N."/>
            <person name="Ivanova N."/>
            <person name="Richardson P."/>
        </authorList>
    </citation>
    <scope>NUCLEOTIDE SEQUENCE [LARGE SCALE GENOMIC DNA]</scope>
    <source>
        <strain>DSM 273 / BCRC 81028 / 2530</strain>
    </source>
</reference>
<keyword id="KW-0067">ATP-binding</keyword>
<keyword id="KW-0143">Chaperone</keyword>
<keyword id="KW-0547">Nucleotide-binding</keyword>
<keyword id="KW-0597">Phosphoprotein</keyword>
<keyword id="KW-1185">Reference proteome</keyword>
<keyword id="KW-0346">Stress response</keyword>
<comment type="function">
    <text evidence="1">Acts as a chaperone.</text>
</comment>
<comment type="induction">
    <text evidence="1">By stress conditions e.g. heat shock.</text>
</comment>
<comment type="similarity">
    <text evidence="1">Belongs to the heat shock protein 70 family.</text>
</comment>
<accession>Q3B577</accession>
<name>DNAK_CHLL3</name>
<evidence type="ECO:0000255" key="1">
    <source>
        <dbReference type="HAMAP-Rule" id="MF_00332"/>
    </source>
</evidence>
<evidence type="ECO:0000256" key="2">
    <source>
        <dbReference type="SAM" id="MobiDB-lite"/>
    </source>
</evidence>
<protein>
    <recommendedName>
        <fullName evidence="1">Chaperone protein DnaK</fullName>
    </recommendedName>
    <alternativeName>
        <fullName evidence="1">HSP70</fullName>
    </alternativeName>
    <alternativeName>
        <fullName evidence="1">Heat shock 70 kDa protein</fullName>
    </alternativeName>
    <alternativeName>
        <fullName evidence="1">Heat shock protein 70</fullName>
    </alternativeName>
</protein>
<sequence length="637" mass="68887">MGKIIGIDLGTTNSCVAVMQGTQPTVIENSEGNRTTPSMVAFTKTGDRLVGQAAKRQAITNPKNTIFSIKRFIGRKFDEVPNEKKIAPYEVVNEGGEARVKINDKTYSPQEVSAMILQKMKQTAEDFLGEKVTEAVITVPAYFNDAQRQATKDAGRIAGLEVKRIINEPTAAALAYGLDRKQTSEKVAVFDLGGGTFDISILELGDGVFEVKSTDGDTHLGGDDFDQKIIDFLADEFKKQEGVDLRNDAIALQRLKEAGEKAKVELSSRTDTEINLPFITATPEGPKHLVINLTRAKFEGMCSDLFDKILEPCRRAVKNSKVEMKDIDEIVLVGGSTRIPKVQALVKEFFGKEPNRSVNPDEVVAIGAAIQGGVLKGDVTDVLLLDVTPLSLGIETLGGVMTKLIDANTTIPTRKQEVFSTAGDNQTSVEVHVLQGERPLAVDNKTLGRFHLGDIPPAPRGMPQIEVTFDIDSNGILNVSAKDKATGKEQSIKIESSSKLTDAEVEKMKEDAKVHAEEDQKRKEEIEVKNSADSLIFSTEKQLSELGEKIPADKKPVIEGALEKLKDAHKNGTIESIKGAMDELSKVWGEVASNLYQAEAPGADAPEGQAPQDGGSKKGGEGAVENAEYEVIDGDGK</sequence>
<gene>
    <name evidence="1" type="primary">dnaK</name>
    <name type="ordered locus">Plut_0621</name>
</gene>
<feature type="chain" id="PRO_1000059625" description="Chaperone protein DnaK">
    <location>
        <begin position="1"/>
        <end position="637"/>
    </location>
</feature>
<feature type="region of interest" description="Disordered" evidence="2">
    <location>
        <begin position="598"/>
        <end position="637"/>
    </location>
</feature>
<feature type="compositionally biased region" description="Acidic residues" evidence="2">
    <location>
        <begin position="627"/>
        <end position="637"/>
    </location>
</feature>
<feature type="modified residue" description="Phosphothreonine; by autocatalysis" evidence="1">
    <location>
        <position position="196"/>
    </location>
</feature>
<dbReference type="EMBL" id="CP000096">
    <property type="protein sequence ID" value="ABB23504.1"/>
    <property type="molecule type" value="Genomic_DNA"/>
</dbReference>
<dbReference type="RefSeq" id="WP_011357379.1">
    <property type="nucleotide sequence ID" value="NC_007512.1"/>
</dbReference>
<dbReference type="SMR" id="Q3B577"/>
<dbReference type="STRING" id="319225.Plut_0621"/>
<dbReference type="KEGG" id="plt:Plut_0621"/>
<dbReference type="eggNOG" id="COG0443">
    <property type="taxonomic scope" value="Bacteria"/>
</dbReference>
<dbReference type="HOGENOM" id="CLU_005965_2_1_10"/>
<dbReference type="OrthoDB" id="9766019at2"/>
<dbReference type="Proteomes" id="UP000002709">
    <property type="component" value="Chromosome"/>
</dbReference>
<dbReference type="GO" id="GO:0005524">
    <property type="term" value="F:ATP binding"/>
    <property type="evidence" value="ECO:0007669"/>
    <property type="project" value="UniProtKB-UniRule"/>
</dbReference>
<dbReference type="GO" id="GO:0140662">
    <property type="term" value="F:ATP-dependent protein folding chaperone"/>
    <property type="evidence" value="ECO:0007669"/>
    <property type="project" value="InterPro"/>
</dbReference>
<dbReference type="GO" id="GO:0051082">
    <property type="term" value="F:unfolded protein binding"/>
    <property type="evidence" value="ECO:0007669"/>
    <property type="project" value="InterPro"/>
</dbReference>
<dbReference type="CDD" id="cd10234">
    <property type="entry name" value="ASKHA_NBD_HSP70_DnaK-like"/>
    <property type="match status" value="1"/>
</dbReference>
<dbReference type="FunFam" id="2.60.34.10:FF:000014">
    <property type="entry name" value="Chaperone protein DnaK HSP70"/>
    <property type="match status" value="1"/>
</dbReference>
<dbReference type="FunFam" id="1.20.1270.10:FF:000001">
    <property type="entry name" value="Molecular chaperone DnaK"/>
    <property type="match status" value="1"/>
</dbReference>
<dbReference type="FunFam" id="3.30.420.40:FF:000004">
    <property type="entry name" value="Molecular chaperone DnaK"/>
    <property type="match status" value="1"/>
</dbReference>
<dbReference type="FunFam" id="3.90.640.10:FF:000003">
    <property type="entry name" value="Molecular chaperone DnaK"/>
    <property type="match status" value="1"/>
</dbReference>
<dbReference type="Gene3D" id="1.20.1270.10">
    <property type="match status" value="1"/>
</dbReference>
<dbReference type="Gene3D" id="3.30.420.40">
    <property type="match status" value="2"/>
</dbReference>
<dbReference type="Gene3D" id="3.90.640.10">
    <property type="entry name" value="Actin, Chain A, domain 4"/>
    <property type="match status" value="1"/>
</dbReference>
<dbReference type="Gene3D" id="2.60.34.10">
    <property type="entry name" value="Substrate Binding Domain Of DNAk, Chain A, domain 1"/>
    <property type="match status" value="1"/>
</dbReference>
<dbReference type="HAMAP" id="MF_00332">
    <property type="entry name" value="DnaK"/>
    <property type="match status" value="1"/>
</dbReference>
<dbReference type="InterPro" id="IPR043129">
    <property type="entry name" value="ATPase_NBD"/>
</dbReference>
<dbReference type="InterPro" id="IPR012725">
    <property type="entry name" value="Chaperone_DnaK"/>
</dbReference>
<dbReference type="InterPro" id="IPR018181">
    <property type="entry name" value="Heat_shock_70_CS"/>
</dbReference>
<dbReference type="InterPro" id="IPR029048">
    <property type="entry name" value="HSP70_C_sf"/>
</dbReference>
<dbReference type="InterPro" id="IPR029047">
    <property type="entry name" value="HSP70_peptide-bd_sf"/>
</dbReference>
<dbReference type="InterPro" id="IPR013126">
    <property type="entry name" value="Hsp_70_fam"/>
</dbReference>
<dbReference type="NCBIfam" id="NF001413">
    <property type="entry name" value="PRK00290.1"/>
    <property type="match status" value="1"/>
</dbReference>
<dbReference type="NCBIfam" id="NF003520">
    <property type="entry name" value="PRK05183.1"/>
    <property type="match status" value="1"/>
</dbReference>
<dbReference type="NCBIfam" id="TIGR02350">
    <property type="entry name" value="prok_dnaK"/>
    <property type="match status" value="1"/>
</dbReference>
<dbReference type="PANTHER" id="PTHR19375">
    <property type="entry name" value="HEAT SHOCK PROTEIN 70KDA"/>
    <property type="match status" value="1"/>
</dbReference>
<dbReference type="Pfam" id="PF00012">
    <property type="entry name" value="HSP70"/>
    <property type="match status" value="1"/>
</dbReference>
<dbReference type="PRINTS" id="PR00301">
    <property type="entry name" value="HEATSHOCK70"/>
</dbReference>
<dbReference type="SUPFAM" id="SSF53067">
    <property type="entry name" value="Actin-like ATPase domain"/>
    <property type="match status" value="2"/>
</dbReference>
<dbReference type="SUPFAM" id="SSF100934">
    <property type="entry name" value="Heat shock protein 70kD (HSP70), C-terminal subdomain"/>
    <property type="match status" value="1"/>
</dbReference>
<dbReference type="SUPFAM" id="SSF100920">
    <property type="entry name" value="Heat shock protein 70kD (HSP70), peptide-binding domain"/>
    <property type="match status" value="1"/>
</dbReference>
<dbReference type="PROSITE" id="PS00297">
    <property type="entry name" value="HSP70_1"/>
    <property type="match status" value="1"/>
</dbReference>
<dbReference type="PROSITE" id="PS00329">
    <property type="entry name" value="HSP70_2"/>
    <property type="match status" value="1"/>
</dbReference>
<dbReference type="PROSITE" id="PS01036">
    <property type="entry name" value="HSP70_3"/>
    <property type="match status" value="1"/>
</dbReference>
<organism>
    <name type="scientific">Chlorobium luteolum (strain DSM 273 / BCRC 81028 / 2530)</name>
    <name type="common">Pelodictyon luteolum</name>
    <dbReference type="NCBI Taxonomy" id="319225"/>
    <lineage>
        <taxon>Bacteria</taxon>
        <taxon>Pseudomonadati</taxon>
        <taxon>Chlorobiota</taxon>
        <taxon>Chlorobiia</taxon>
        <taxon>Chlorobiales</taxon>
        <taxon>Chlorobiaceae</taxon>
        <taxon>Chlorobium/Pelodictyon group</taxon>
        <taxon>Pelodictyon</taxon>
    </lineage>
</organism>